<name>SYGB_XYLFA</name>
<organism>
    <name type="scientific">Xylella fastidiosa (strain 9a5c)</name>
    <dbReference type="NCBI Taxonomy" id="160492"/>
    <lineage>
        <taxon>Bacteria</taxon>
        <taxon>Pseudomonadati</taxon>
        <taxon>Pseudomonadota</taxon>
        <taxon>Gammaproteobacteria</taxon>
        <taxon>Lysobacterales</taxon>
        <taxon>Lysobacteraceae</taxon>
        <taxon>Xylella</taxon>
    </lineage>
</organism>
<comment type="catalytic activity">
    <reaction>
        <text>tRNA(Gly) + glycine + ATP = glycyl-tRNA(Gly) + AMP + diphosphate</text>
        <dbReference type="Rhea" id="RHEA:16013"/>
        <dbReference type="Rhea" id="RHEA-COMP:9664"/>
        <dbReference type="Rhea" id="RHEA-COMP:9683"/>
        <dbReference type="ChEBI" id="CHEBI:30616"/>
        <dbReference type="ChEBI" id="CHEBI:33019"/>
        <dbReference type="ChEBI" id="CHEBI:57305"/>
        <dbReference type="ChEBI" id="CHEBI:78442"/>
        <dbReference type="ChEBI" id="CHEBI:78522"/>
        <dbReference type="ChEBI" id="CHEBI:456215"/>
        <dbReference type="EC" id="6.1.1.14"/>
    </reaction>
</comment>
<comment type="subunit">
    <text evidence="1">Tetramer of two alpha and two beta subunits.</text>
</comment>
<comment type="subcellular location">
    <subcellularLocation>
        <location evidence="1">Cytoplasm</location>
    </subcellularLocation>
</comment>
<comment type="similarity">
    <text evidence="2">Belongs to the class-II aminoacyl-tRNA synthetase family.</text>
</comment>
<evidence type="ECO:0000250" key="1"/>
<evidence type="ECO:0000305" key="2"/>
<protein>
    <recommendedName>
        <fullName>Glycine--tRNA ligase beta subunit</fullName>
        <ecNumber>6.1.1.14</ecNumber>
    </recommendedName>
    <alternativeName>
        <fullName>Glycyl-tRNA synthetase beta subunit</fullName>
        <shortName>GlyRS</shortName>
    </alternativeName>
</protein>
<gene>
    <name type="primary">glyS</name>
    <name type="ordered locus">XF_1959</name>
</gene>
<proteinExistence type="inferred from homology"/>
<reference key="1">
    <citation type="journal article" date="2000" name="Nature">
        <title>The genome sequence of the plant pathogen Xylella fastidiosa.</title>
        <authorList>
            <person name="Simpson A.J.G."/>
            <person name="Reinach F.C."/>
            <person name="Arruda P."/>
            <person name="Abreu F.A."/>
            <person name="Acencio M."/>
            <person name="Alvarenga R."/>
            <person name="Alves L.M.C."/>
            <person name="Araya J.E."/>
            <person name="Baia G.S."/>
            <person name="Baptista C.S."/>
            <person name="Barros M.H."/>
            <person name="Bonaccorsi E.D."/>
            <person name="Bordin S."/>
            <person name="Bove J.M."/>
            <person name="Briones M.R.S."/>
            <person name="Bueno M.R.P."/>
            <person name="Camargo A.A."/>
            <person name="Camargo L.E.A."/>
            <person name="Carraro D.M."/>
            <person name="Carrer H."/>
            <person name="Colauto N.B."/>
            <person name="Colombo C."/>
            <person name="Costa F.F."/>
            <person name="Costa M.C.R."/>
            <person name="Costa-Neto C.M."/>
            <person name="Coutinho L.L."/>
            <person name="Cristofani M."/>
            <person name="Dias-Neto E."/>
            <person name="Docena C."/>
            <person name="El-Dorry H."/>
            <person name="Facincani A.P."/>
            <person name="Ferreira A.J.S."/>
            <person name="Ferreira V.C.A."/>
            <person name="Ferro J.A."/>
            <person name="Fraga J.S."/>
            <person name="Franca S.C."/>
            <person name="Franco M.C."/>
            <person name="Frohme M."/>
            <person name="Furlan L.R."/>
            <person name="Garnier M."/>
            <person name="Goldman G.H."/>
            <person name="Goldman M.H.S."/>
            <person name="Gomes S.L."/>
            <person name="Gruber A."/>
            <person name="Ho P.L."/>
            <person name="Hoheisel J.D."/>
            <person name="Junqueira M.L."/>
            <person name="Kemper E.L."/>
            <person name="Kitajima J.P."/>
            <person name="Krieger J.E."/>
            <person name="Kuramae E.E."/>
            <person name="Laigret F."/>
            <person name="Lambais M.R."/>
            <person name="Leite L.C.C."/>
            <person name="Lemos E.G.M."/>
            <person name="Lemos M.V.F."/>
            <person name="Lopes S.A."/>
            <person name="Lopes C.R."/>
            <person name="Machado J.A."/>
            <person name="Machado M.A."/>
            <person name="Madeira A.M.B.N."/>
            <person name="Madeira H.M.F."/>
            <person name="Marino C.L."/>
            <person name="Marques M.V."/>
            <person name="Martins E.A.L."/>
            <person name="Martins E.M.F."/>
            <person name="Matsukuma A.Y."/>
            <person name="Menck C.F.M."/>
            <person name="Miracca E.C."/>
            <person name="Miyaki C.Y."/>
            <person name="Monteiro-Vitorello C.B."/>
            <person name="Moon D.H."/>
            <person name="Nagai M.A."/>
            <person name="Nascimento A.L.T.O."/>
            <person name="Netto L.E.S."/>
            <person name="Nhani A. Jr."/>
            <person name="Nobrega F.G."/>
            <person name="Nunes L.R."/>
            <person name="Oliveira M.A."/>
            <person name="de Oliveira M.C."/>
            <person name="de Oliveira R.C."/>
            <person name="Palmieri D.A."/>
            <person name="Paris A."/>
            <person name="Peixoto B.R."/>
            <person name="Pereira G.A.G."/>
            <person name="Pereira H.A. Jr."/>
            <person name="Pesquero J.B."/>
            <person name="Quaggio R.B."/>
            <person name="Roberto P.G."/>
            <person name="Rodrigues V."/>
            <person name="de Rosa A.J.M."/>
            <person name="de Rosa V.E. Jr."/>
            <person name="de Sa R.G."/>
            <person name="Santelli R.V."/>
            <person name="Sawasaki H.E."/>
            <person name="da Silva A.C.R."/>
            <person name="da Silva A.M."/>
            <person name="da Silva F.R."/>
            <person name="Silva W.A. Jr."/>
            <person name="da Silveira J.F."/>
            <person name="Silvestri M.L.Z."/>
            <person name="Siqueira W.J."/>
            <person name="de Souza A.A."/>
            <person name="de Souza A.P."/>
            <person name="Terenzi M.F."/>
            <person name="Truffi D."/>
            <person name="Tsai S.M."/>
            <person name="Tsuhako M.H."/>
            <person name="Vallada H."/>
            <person name="Van Sluys M.A."/>
            <person name="Verjovski-Almeida S."/>
            <person name="Vettore A.L."/>
            <person name="Zago M.A."/>
            <person name="Zatz M."/>
            <person name="Meidanis J."/>
            <person name="Setubal J.C."/>
        </authorList>
    </citation>
    <scope>NUCLEOTIDE SEQUENCE [LARGE SCALE GENOMIC DNA]</scope>
    <source>
        <strain>9a5c</strain>
    </source>
</reference>
<feature type="chain" id="PRO_0000072940" description="Glycine--tRNA ligase beta subunit">
    <location>
        <begin position="1"/>
        <end position="722"/>
    </location>
</feature>
<keyword id="KW-0030">Aminoacyl-tRNA synthetase</keyword>
<keyword id="KW-0067">ATP-binding</keyword>
<keyword id="KW-0963">Cytoplasm</keyword>
<keyword id="KW-0436">Ligase</keyword>
<keyword id="KW-0547">Nucleotide-binding</keyword>
<keyword id="KW-0648">Protein biosynthesis</keyword>
<sequence length="722" mass="80150">MTELKPLLIELGTEELPVNALPNLSRAFFEGVLAGLEKRGIVVDHGEAKSLSTPRRLAVLLTAVAVEQPKQYRELFGPYLNTAFDTEGKPTKALEGFAAKCGVNWRTLERIRDTKGERFVHRVVVPGERTDALLPGILTEAIAGMPIPKPMRWGAHEYLFARPVHWLVMLLGQDVVEAEIMGVKAGRISRGHRFLYDKPVSLSDPQNYIDVLQAAYVLVDPAARRARIVAEIEAVARQVGGVARITEDNVAQVVNLVEWPSAVLCSFERVFLEVPQEALIQTMEVNQKFFPVLDSLGKLTEKFIGIANIESNDVAEVAKGYERVIRPRFSDAKFFFNEDLKQGLKAMGERLRTVTYHAKLGTLADKVARVLVLAEAIAPQIGVDPLLARRVALLSKNDLQSRMVNEFPELQGIAGHHYALISGELPEVAMAIEDAYRPRFSGDEIARSPLGKVLGLAERLDTLACGFAVGMKPTGNKDPFGLRRNALGLARTMIESRFDLDLKVLLDQASDWVAFATTIEQERHAQESVKQSKKEAAVKHSVPQVSDEKSARIEELYDFIVERLRGYYADKGIPTTHFNAVAELKPVSLYDFHRRLDAIGRFAALPEAEALAVANKRIRNILRKAEIKIPASVDATLFDQPAESGLLVALEGVITDTRSALDCKNYVSVLTCLARLRPPIDEFFDKVMVNDENLMLRANRLALLQRLGEYLCCVAAIEHLSN</sequence>
<dbReference type="EC" id="6.1.1.14"/>
<dbReference type="EMBL" id="AE003849">
    <property type="protein sequence ID" value="AAF84761.1"/>
    <property type="molecule type" value="Genomic_DNA"/>
</dbReference>
<dbReference type="PIR" id="A82617">
    <property type="entry name" value="A82617"/>
</dbReference>
<dbReference type="RefSeq" id="WP_010894418.1">
    <property type="nucleotide sequence ID" value="NC_002488.3"/>
</dbReference>
<dbReference type="SMR" id="Q9PC26"/>
<dbReference type="STRING" id="160492.XF_1959"/>
<dbReference type="KEGG" id="xfa:XF_1959"/>
<dbReference type="PATRIC" id="fig|160492.11.peg.2088"/>
<dbReference type="eggNOG" id="COG0751">
    <property type="taxonomic scope" value="Bacteria"/>
</dbReference>
<dbReference type="HOGENOM" id="CLU_007220_2_2_6"/>
<dbReference type="Proteomes" id="UP000000812">
    <property type="component" value="Chromosome"/>
</dbReference>
<dbReference type="GO" id="GO:0005829">
    <property type="term" value="C:cytosol"/>
    <property type="evidence" value="ECO:0007669"/>
    <property type="project" value="TreeGrafter"/>
</dbReference>
<dbReference type="GO" id="GO:0004814">
    <property type="term" value="F:arginine-tRNA ligase activity"/>
    <property type="evidence" value="ECO:0007669"/>
    <property type="project" value="InterPro"/>
</dbReference>
<dbReference type="GO" id="GO:0005524">
    <property type="term" value="F:ATP binding"/>
    <property type="evidence" value="ECO:0007669"/>
    <property type="project" value="UniProtKB-UniRule"/>
</dbReference>
<dbReference type="GO" id="GO:0004820">
    <property type="term" value="F:glycine-tRNA ligase activity"/>
    <property type="evidence" value="ECO:0007669"/>
    <property type="project" value="UniProtKB-UniRule"/>
</dbReference>
<dbReference type="GO" id="GO:0006420">
    <property type="term" value="P:arginyl-tRNA aminoacylation"/>
    <property type="evidence" value="ECO:0007669"/>
    <property type="project" value="InterPro"/>
</dbReference>
<dbReference type="GO" id="GO:0006426">
    <property type="term" value="P:glycyl-tRNA aminoacylation"/>
    <property type="evidence" value="ECO:0007669"/>
    <property type="project" value="UniProtKB-UniRule"/>
</dbReference>
<dbReference type="HAMAP" id="MF_00255">
    <property type="entry name" value="Gly_tRNA_synth_beta"/>
    <property type="match status" value="1"/>
</dbReference>
<dbReference type="InterPro" id="IPR008909">
    <property type="entry name" value="DALR_anticod-bd"/>
</dbReference>
<dbReference type="InterPro" id="IPR015944">
    <property type="entry name" value="Gly-tRNA-synth_bsu"/>
</dbReference>
<dbReference type="InterPro" id="IPR006194">
    <property type="entry name" value="Gly-tRNA-synth_heterodimer"/>
</dbReference>
<dbReference type="NCBIfam" id="TIGR00211">
    <property type="entry name" value="glyS"/>
    <property type="match status" value="1"/>
</dbReference>
<dbReference type="PANTHER" id="PTHR30075:SF2">
    <property type="entry name" value="GLYCINE--TRNA LIGASE, CHLOROPLASTIC_MITOCHONDRIAL 2"/>
    <property type="match status" value="1"/>
</dbReference>
<dbReference type="PANTHER" id="PTHR30075">
    <property type="entry name" value="GLYCYL-TRNA SYNTHETASE"/>
    <property type="match status" value="1"/>
</dbReference>
<dbReference type="Pfam" id="PF05746">
    <property type="entry name" value="DALR_1"/>
    <property type="match status" value="1"/>
</dbReference>
<dbReference type="Pfam" id="PF02092">
    <property type="entry name" value="tRNA_synt_2f"/>
    <property type="match status" value="1"/>
</dbReference>
<dbReference type="PRINTS" id="PR01045">
    <property type="entry name" value="TRNASYNTHGB"/>
</dbReference>
<dbReference type="SUPFAM" id="SSF109604">
    <property type="entry name" value="HD-domain/PDEase-like"/>
    <property type="match status" value="1"/>
</dbReference>
<dbReference type="PROSITE" id="PS50861">
    <property type="entry name" value="AA_TRNA_LIGASE_II_GLYAB"/>
    <property type="match status" value="1"/>
</dbReference>
<accession>Q9PC26</accession>